<dbReference type="EMBL" id="CP000962">
    <property type="protein sequence ID" value="ACA56662.1"/>
    <property type="molecule type" value="Genomic_DNA"/>
</dbReference>
<dbReference type="RefSeq" id="WP_003357920.1">
    <property type="nucleotide sequence ID" value="NC_010520.1"/>
</dbReference>
<dbReference type="SMR" id="B1KZR6"/>
<dbReference type="KEGG" id="cbl:CLK_2373"/>
<dbReference type="HOGENOM" id="CLU_061463_3_2_9"/>
<dbReference type="GO" id="GO:0005737">
    <property type="term" value="C:cytoplasm"/>
    <property type="evidence" value="ECO:0007669"/>
    <property type="project" value="UniProtKB-ARBA"/>
</dbReference>
<dbReference type="GO" id="GO:1990904">
    <property type="term" value="C:ribonucleoprotein complex"/>
    <property type="evidence" value="ECO:0007669"/>
    <property type="project" value="UniProtKB-KW"/>
</dbReference>
<dbReference type="GO" id="GO:0005840">
    <property type="term" value="C:ribosome"/>
    <property type="evidence" value="ECO:0007669"/>
    <property type="project" value="UniProtKB-KW"/>
</dbReference>
<dbReference type="GO" id="GO:0019843">
    <property type="term" value="F:rRNA binding"/>
    <property type="evidence" value="ECO:0007669"/>
    <property type="project" value="UniProtKB-UniRule"/>
</dbReference>
<dbReference type="GO" id="GO:0003735">
    <property type="term" value="F:structural constituent of ribosome"/>
    <property type="evidence" value="ECO:0007669"/>
    <property type="project" value="InterPro"/>
</dbReference>
<dbReference type="GO" id="GO:0006412">
    <property type="term" value="P:translation"/>
    <property type="evidence" value="ECO:0007669"/>
    <property type="project" value="UniProtKB-UniRule"/>
</dbReference>
<dbReference type="HAMAP" id="MF_01363">
    <property type="entry name" value="Ribosomal_bL21"/>
    <property type="match status" value="1"/>
</dbReference>
<dbReference type="InterPro" id="IPR028909">
    <property type="entry name" value="bL21-like"/>
</dbReference>
<dbReference type="InterPro" id="IPR036164">
    <property type="entry name" value="bL21-like_sf"/>
</dbReference>
<dbReference type="InterPro" id="IPR001787">
    <property type="entry name" value="Ribosomal_bL21"/>
</dbReference>
<dbReference type="InterPro" id="IPR018258">
    <property type="entry name" value="Ribosomal_bL21_CS"/>
</dbReference>
<dbReference type="NCBIfam" id="TIGR00061">
    <property type="entry name" value="L21"/>
    <property type="match status" value="1"/>
</dbReference>
<dbReference type="PANTHER" id="PTHR21349">
    <property type="entry name" value="50S RIBOSOMAL PROTEIN L21"/>
    <property type="match status" value="1"/>
</dbReference>
<dbReference type="PANTHER" id="PTHR21349:SF0">
    <property type="entry name" value="LARGE RIBOSOMAL SUBUNIT PROTEIN BL21M"/>
    <property type="match status" value="1"/>
</dbReference>
<dbReference type="Pfam" id="PF00829">
    <property type="entry name" value="Ribosomal_L21p"/>
    <property type="match status" value="1"/>
</dbReference>
<dbReference type="SUPFAM" id="SSF141091">
    <property type="entry name" value="L21p-like"/>
    <property type="match status" value="1"/>
</dbReference>
<dbReference type="PROSITE" id="PS01169">
    <property type="entry name" value="RIBOSOMAL_L21"/>
    <property type="match status" value="1"/>
</dbReference>
<proteinExistence type="inferred from homology"/>
<organism>
    <name type="scientific">Clostridium botulinum (strain Loch Maree / Type A3)</name>
    <dbReference type="NCBI Taxonomy" id="498214"/>
    <lineage>
        <taxon>Bacteria</taxon>
        <taxon>Bacillati</taxon>
        <taxon>Bacillota</taxon>
        <taxon>Clostridia</taxon>
        <taxon>Eubacteriales</taxon>
        <taxon>Clostridiaceae</taxon>
        <taxon>Clostridium</taxon>
    </lineage>
</organism>
<feature type="chain" id="PRO_1000143776" description="Large ribosomal subunit protein bL21">
    <location>
        <begin position="1"/>
        <end position="104"/>
    </location>
</feature>
<gene>
    <name evidence="1" type="primary">rplU</name>
    <name type="ordered locus">CLK_2373</name>
</gene>
<keyword id="KW-0687">Ribonucleoprotein</keyword>
<keyword id="KW-0689">Ribosomal protein</keyword>
<keyword id="KW-0694">RNA-binding</keyword>
<keyword id="KW-0699">rRNA-binding</keyword>
<name>RL21_CLOBM</name>
<accession>B1KZR6</accession>
<reference key="1">
    <citation type="journal article" date="2007" name="PLoS ONE">
        <title>Analysis of the neurotoxin complex genes in Clostridium botulinum A1-A4 and B1 strains: BoNT/A3, /Ba4 and /B1 clusters are located within plasmids.</title>
        <authorList>
            <person name="Smith T.J."/>
            <person name="Hill K.K."/>
            <person name="Foley B.T."/>
            <person name="Detter J.C."/>
            <person name="Munk A.C."/>
            <person name="Bruce D.C."/>
            <person name="Doggett N.A."/>
            <person name="Smith L.A."/>
            <person name="Marks J.D."/>
            <person name="Xie G."/>
            <person name="Brettin T.S."/>
        </authorList>
    </citation>
    <scope>NUCLEOTIDE SEQUENCE [LARGE SCALE GENOMIC DNA]</scope>
    <source>
        <strain>Loch Maree / Type A3</strain>
    </source>
</reference>
<protein>
    <recommendedName>
        <fullName evidence="1">Large ribosomal subunit protein bL21</fullName>
    </recommendedName>
    <alternativeName>
        <fullName evidence="2">50S ribosomal protein L21</fullName>
    </alternativeName>
</protein>
<evidence type="ECO:0000255" key="1">
    <source>
        <dbReference type="HAMAP-Rule" id="MF_01363"/>
    </source>
</evidence>
<evidence type="ECO:0000305" key="2"/>
<sequence>MYAVVVTGGKQYKVAEGDVLFVEKLTADVDSTVELDNVLLVGKDNGETVVGKPMVEGAKVTAKVLAQGKAKKVVVFKYKPKKDYRKKQGHRQPYTKIQIEKINA</sequence>
<comment type="function">
    <text evidence="1">This protein binds to 23S rRNA in the presence of protein L20.</text>
</comment>
<comment type="subunit">
    <text evidence="1">Part of the 50S ribosomal subunit. Contacts protein L20.</text>
</comment>
<comment type="similarity">
    <text evidence="1">Belongs to the bacterial ribosomal protein bL21 family.</text>
</comment>